<protein>
    <recommendedName>
        <fullName>CAMPATH-1 antigen</fullName>
    </recommendedName>
    <alternativeName>
        <fullName>Epididymal secretory protein E5</fullName>
    </alternativeName>
    <cdAntigenName>CD52</cdAntigenName>
</protein>
<keyword id="KW-1003">Cell membrane</keyword>
<keyword id="KW-0325">Glycoprotein</keyword>
<keyword id="KW-0336">GPI-anchor</keyword>
<keyword id="KW-0449">Lipoprotein</keyword>
<keyword id="KW-0472">Membrane</keyword>
<keyword id="KW-1185">Reference proteome</keyword>
<keyword id="KW-0732">Signal</keyword>
<feature type="signal peptide" evidence="1">
    <location>
        <begin position="1"/>
        <end position="25"/>
    </location>
</feature>
<feature type="peptide" id="PRO_0000020902" description="CAMPATH-1 antigen">
    <location>
        <begin position="26"/>
        <end position="45"/>
    </location>
</feature>
<feature type="propeptide" id="PRO_0000020903" description="Removed in mature form" evidence="1">
    <location>
        <begin position="46"/>
        <end position="67"/>
    </location>
</feature>
<feature type="lipid moiety-binding region" description="GPI-anchor amidated serine" evidence="1">
    <location>
        <position position="45"/>
    </location>
</feature>
<feature type="glycosylation site" description="N-linked (GlcNAc...) asparagine" evidence="1">
    <location>
        <position position="26"/>
    </location>
</feature>
<accession>Q28896</accession>
<sequence length="67" mass="7160">MKGFLFLLLTISLLVMIQIQTGVLGNSTTPRMTTKKVKSATPALSSLGGGSVLLFLANTLIQLFYLS</sequence>
<proteinExistence type="evidence at transcript level"/>
<dbReference type="EMBL" id="S77412">
    <property type="protein sequence ID" value="AAB34265.1"/>
    <property type="molecule type" value="mRNA"/>
</dbReference>
<dbReference type="PIR" id="I69230">
    <property type="entry name" value="I69230"/>
</dbReference>
<dbReference type="RefSeq" id="NP_001003240.1">
    <property type="nucleotide sequence ID" value="NM_001003240.1"/>
</dbReference>
<dbReference type="FunCoup" id="Q28896">
    <property type="interactions" value="1"/>
</dbReference>
<dbReference type="STRING" id="9615.ENSCAFP00000018435"/>
<dbReference type="GlyCosmos" id="Q28896">
    <property type="glycosylation" value="1 site, No reported glycans"/>
</dbReference>
<dbReference type="PaxDb" id="9612-ENSCAFP00000018435"/>
<dbReference type="ABCD" id="Q28896">
    <property type="antibodies" value="1 sequenced antibody"/>
</dbReference>
<dbReference type="Ensembl" id="ENSCAFT00000019877.2">
    <property type="protein sequence ID" value="ENSCAFP00000018435.1"/>
    <property type="gene ID" value="ENSCAFG00000012520.2"/>
</dbReference>
<dbReference type="Ensembl" id="ENSCAFT00030027530.1">
    <property type="protein sequence ID" value="ENSCAFP00030024023.1"/>
    <property type="gene ID" value="ENSCAFG00030014935.1"/>
</dbReference>
<dbReference type="Ensembl" id="ENSCAFT00040007980.1">
    <property type="protein sequence ID" value="ENSCAFP00040006951.1"/>
    <property type="gene ID" value="ENSCAFG00040004179.1"/>
</dbReference>
<dbReference type="Ensembl" id="ENSCAFT00845022339.1">
    <property type="protein sequence ID" value="ENSCAFP00845017564.1"/>
    <property type="gene ID" value="ENSCAFG00845012550.1"/>
</dbReference>
<dbReference type="GeneID" id="403918"/>
<dbReference type="KEGG" id="cfa:403918"/>
<dbReference type="CTD" id="1043"/>
<dbReference type="VEuPathDB" id="HostDB:ENSCAFG00845012550"/>
<dbReference type="VGNC" id="VGNC:38963">
    <property type="gene designation" value="CD52"/>
</dbReference>
<dbReference type="eggNOG" id="ENOG502RR9C">
    <property type="taxonomic scope" value="Eukaryota"/>
</dbReference>
<dbReference type="GeneTree" id="ENSGT00860000134004"/>
<dbReference type="HOGENOM" id="CLU_205433_0_0_1"/>
<dbReference type="InParanoid" id="Q28896"/>
<dbReference type="OMA" id="FANTLMC"/>
<dbReference type="Reactome" id="R-CFA-163125">
    <property type="pathway name" value="Post-translational modification: synthesis of GPI-anchored proteins"/>
</dbReference>
<dbReference type="Proteomes" id="UP000002254">
    <property type="component" value="Chromosome 2"/>
</dbReference>
<dbReference type="Proteomes" id="UP000694429">
    <property type="component" value="Chromosome 2"/>
</dbReference>
<dbReference type="Proteomes" id="UP000694542">
    <property type="component" value="Chromosome 2"/>
</dbReference>
<dbReference type="Proteomes" id="UP000805418">
    <property type="component" value="Chromosome 2"/>
</dbReference>
<dbReference type="Bgee" id="ENSCAFG00000012520">
    <property type="expression patterns" value="Expressed in thymus and 30 other cell types or tissues"/>
</dbReference>
<dbReference type="GO" id="GO:0005886">
    <property type="term" value="C:plasma membrane"/>
    <property type="evidence" value="ECO:0007669"/>
    <property type="project" value="UniProtKB-SubCell"/>
</dbReference>
<dbReference type="GO" id="GO:0098552">
    <property type="term" value="C:side of membrane"/>
    <property type="evidence" value="ECO:0007669"/>
    <property type="project" value="UniProtKB-KW"/>
</dbReference>
<dbReference type="GO" id="GO:0097225">
    <property type="term" value="C:sperm midpiece"/>
    <property type="evidence" value="ECO:0000318"/>
    <property type="project" value="GO_Central"/>
</dbReference>
<dbReference type="GO" id="GO:0007204">
    <property type="term" value="P:positive regulation of cytosolic calcium ion concentration"/>
    <property type="evidence" value="ECO:0000318"/>
    <property type="project" value="GO_Central"/>
</dbReference>
<dbReference type="GO" id="GO:0009617">
    <property type="term" value="P:response to bacterium"/>
    <property type="evidence" value="ECO:0007669"/>
    <property type="project" value="Ensembl"/>
</dbReference>
<dbReference type="InterPro" id="IPR026643">
    <property type="entry name" value="CAMPATH-1"/>
</dbReference>
<dbReference type="PANTHER" id="PTHR15029">
    <property type="entry name" value="CAMPATH-1 ANTIGEN"/>
    <property type="match status" value="1"/>
</dbReference>
<dbReference type="PANTHER" id="PTHR15029:SF0">
    <property type="entry name" value="CAMPATH-1 ANTIGEN"/>
    <property type="match status" value="1"/>
</dbReference>
<dbReference type="Pfam" id="PF15116">
    <property type="entry name" value="CD52"/>
    <property type="match status" value="1"/>
</dbReference>
<comment type="function">
    <text>May play a role in carrying and orienting carbohydrate, as well as having a more specific role.</text>
</comment>
<comment type="subcellular location">
    <subcellularLocation>
        <location>Cell membrane</location>
        <topology>Lipid-anchor</topology>
        <topology>GPI-anchor</topology>
    </subcellularLocation>
</comment>
<comment type="tissue specificity">
    <text evidence="2">Epididymis. Highest levels are found in the distal corpus and cauda. Little or no expression in the caput and proximal cauda regions.</text>
</comment>
<gene>
    <name type="primary">CD52</name>
    <name type="synonym">CDW52</name>
    <name type="synonym">CE5</name>
</gene>
<reference key="1">
    <citation type="journal article" date="1994" name="Int. J. Androl.">
        <title>Gene expression in the dog epididymis: a model for human epididymal function.</title>
        <authorList>
            <person name="Ellerbrock K."/>
            <person name="Pera I."/>
            <person name="Hartung S."/>
            <person name="Ivell R."/>
        </authorList>
    </citation>
    <scope>NUCLEOTIDE SEQUENCE [MRNA]</scope>
    <source>
        <tissue>Epididymis</tissue>
    </source>
</reference>
<reference key="2">
    <citation type="journal article" date="1994" name="Int. J. Androl.">
        <title>Regional variation of specific gene expression in the dog epididymis as revealed by in-situ transcript hybridization.</title>
        <authorList>
            <person name="Pera I."/>
            <person name="Ivell R."/>
            <person name="Kirchhoff C."/>
        </authorList>
    </citation>
    <scope>TISSUE SPECIFICITY</scope>
</reference>
<organism>
    <name type="scientific">Canis lupus familiaris</name>
    <name type="common">Dog</name>
    <name type="synonym">Canis familiaris</name>
    <dbReference type="NCBI Taxonomy" id="9615"/>
    <lineage>
        <taxon>Eukaryota</taxon>
        <taxon>Metazoa</taxon>
        <taxon>Chordata</taxon>
        <taxon>Craniata</taxon>
        <taxon>Vertebrata</taxon>
        <taxon>Euteleostomi</taxon>
        <taxon>Mammalia</taxon>
        <taxon>Eutheria</taxon>
        <taxon>Laurasiatheria</taxon>
        <taxon>Carnivora</taxon>
        <taxon>Caniformia</taxon>
        <taxon>Canidae</taxon>
        <taxon>Canis</taxon>
    </lineage>
</organism>
<evidence type="ECO:0000255" key="1"/>
<evidence type="ECO:0000269" key="2">
    <source>
    </source>
</evidence>
<name>CD52_CANLF</name>